<keyword id="KW-0963">Cytoplasm</keyword>
<keyword id="KW-0488">Methylation</keyword>
<keyword id="KW-0648">Protein biosynthesis</keyword>
<dbReference type="EMBL" id="CP000890">
    <property type="protein sequence ID" value="ABX77578.1"/>
    <property type="molecule type" value="Genomic_DNA"/>
</dbReference>
<dbReference type="RefSeq" id="WP_005772919.1">
    <property type="nucleotide sequence ID" value="NC_010117.1"/>
</dbReference>
<dbReference type="SMR" id="A9N9K2"/>
<dbReference type="KEGG" id="cbs:COXBURSA331_A0119"/>
<dbReference type="HOGENOM" id="CLU_036856_0_1_6"/>
<dbReference type="GO" id="GO:0005737">
    <property type="term" value="C:cytoplasm"/>
    <property type="evidence" value="ECO:0007669"/>
    <property type="project" value="UniProtKB-SubCell"/>
</dbReference>
<dbReference type="GO" id="GO:0016149">
    <property type="term" value="F:translation release factor activity, codon specific"/>
    <property type="evidence" value="ECO:0007669"/>
    <property type="project" value="UniProtKB-UniRule"/>
</dbReference>
<dbReference type="FunFam" id="3.30.160.20:FF:000004">
    <property type="entry name" value="Peptide chain release factor 1"/>
    <property type="match status" value="1"/>
</dbReference>
<dbReference type="FunFam" id="3.30.70.1660:FF:000002">
    <property type="entry name" value="Peptide chain release factor 1"/>
    <property type="match status" value="1"/>
</dbReference>
<dbReference type="FunFam" id="3.30.70.1660:FF:000004">
    <property type="entry name" value="Peptide chain release factor 1"/>
    <property type="match status" value="1"/>
</dbReference>
<dbReference type="Gene3D" id="3.30.160.20">
    <property type="match status" value="1"/>
</dbReference>
<dbReference type="Gene3D" id="3.30.70.1660">
    <property type="match status" value="1"/>
</dbReference>
<dbReference type="Gene3D" id="6.10.140.1950">
    <property type="match status" value="1"/>
</dbReference>
<dbReference type="HAMAP" id="MF_00093">
    <property type="entry name" value="Rel_fac_1"/>
    <property type="match status" value="1"/>
</dbReference>
<dbReference type="InterPro" id="IPR005139">
    <property type="entry name" value="PCRF"/>
</dbReference>
<dbReference type="InterPro" id="IPR000352">
    <property type="entry name" value="Pep_chain_release_fac_I"/>
</dbReference>
<dbReference type="InterPro" id="IPR045853">
    <property type="entry name" value="Pep_chain_release_fac_I_sf"/>
</dbReference>
<dbReference type="InterPro" id="IPR050057">
    <property type="entry name" value="Prokaryotic/Mito_RF"/>
</dbReference>
<dbReference type="InterPro" id="IPR004373">
    <property type="entry name" value="RF-1"/>
</dbReference>
<dbReference type="NCBIfam" id="TIGR00019">
    <property type="entry name" value="prfA"/>
    <property type="match status" value="1"/>
</dbReference>
<dbReference type="NCBIfam" id="NF001859">
    <property type="entry name" value="PRK00591.1"/>
    <property type="match status" value="1"/>
</dbReference>
<dbReference type="PANTHER" id="PTHR43804">
    <property type="entry name" value="LD18447P"/>
    <property type="match status" value="1"/>
</dbReference>
<dbReference type="PANTHER" id="PTHR43804:SF7">
    <property type="entry name" value="LD18447P"/>
    <property type="match status" value="1"/>
</dbReference>
<dbReference type="Pfam" id="PF03462">
    <property type="entry name" value="PCRF"/>
    <property type="match status" value="1"/>
</dbReference>
<dbReference type="Pfam" id="PF00472">
    <property type="entry name" value="RF-1"/>
    <property type="match status" value="1"/>
</dbReference>
<dbReference type="SMART" id="SM00937">
    <property type="entry name" value="PCRF"/>
    <property type="match status" value="1"/>
</dbReference>
<dbReference type="SUPFAM" id="SSF75620">
    <property type="entry name" value="Release factor"/>
    <property type="match status" value="1"/>
</dbReference>
<dbReference type="PROSITE" id="PS00745">
    <property type="entry name" value="RF_PROK_I"/>
    <property type="match status" value="1"/>
</dbReference>
<accession>A9N9K2</accession>
<proteinExistence type="inferred from homology"/>
<evidence type="ECO:0000255" key="1">
    <source>
        <dbReference type="HAMAP-Rule" id="MF_00093"/>
    </source>
</evidence>
<evidence type="ECO:0000256" key="2">
    <source>
        <dbReference type="SAM" id="MobiDB-lite"/>
    </source>
</evidence>
<name>RF1_COXBR</name>
<reference key="1">
    <citation type="submission" date="2007-11" db="EMBL/GenBank/DDBJ databases">
        <title>Genome sequencing of phylogenetically and phenotypically diverse Coxiella burnetii isolates.</title>
        <authorList>
            <person name="Seshadri R."/>
            <person name="Samuel J.E."/>
        </authorList>
    </citation>
    <scope>NUCLEOTIDE SEQUENCE [LARGE SCALE GENOMIC DNA]</scope>
    <source>
        <strain>RSA 331 / Henzerling II</strain>
    </source>
</reference>
<gene>
    <name evidence="1" type="primary">prfA</name>
    <name type="ordered locus">COXBURSA331_A0119</name>
</gene>
<comment type="function">
    <text evidence="1">Peptide chain release factor 1 directs the termination of translation in response to the peptide chain termination codons UAG and UAA.</text>
</comment>
<comment type="subcellular location">
    <subcellularLocation>
        <location evidence="1">Cytoplasm</location>
    </subcellularLocation>
</comment>
<comment type="PTM">
    <text evidence="1">Methylated by PrmC. Methylation increases the termination efficiency of RF1.</text>
</comment>
<comment type="similarity">
    <text evidence="1">Belongs to the prokaryotic/mitochondrial release factor family.</text>
</comment>
<feature type="chain" id="PRO_1000075492" description="Peptide chain release factor 1">
    <location>
        <begin position="1"/>
        <end position="361"/>
    </location>
</feature>
<feature type="region of interest" description="Disordered" evidence="2">
    <location>
        <begin position="286"/>
        <end position="306"/>
    </location>
</feature>
<feature type="modified residue" description="N5-methylglutamine" evidence="1">
    <location>
        <position position="237"/>
    </location>
</feature>
<protein>
    <recommendedName>
        <fullName evidence="1">Peptide chain release factor 1</fullName>
        <shortName evidence="1">RF-1</shortName>
    </recommendedName>
</protein>
<organism>
    <name type="scientific">Coxiella burnetii (strain RSA 331 / Henzerling II)</name>
    <dbReference type="NCBI Taxonomy" id="360115"/>
    <lineage>
        <taxon>Bacteria</taxon>
        <taxon>Pseudomonadati</taxon>
        <taxon>Pseudomonadota</taxon>
        <taxon>Gammaproteobacteria</taxon>
        <taxon>Legionellales</taxon>
        <taxon>Coxiellaceae</taxon>
        <taxon>Coxiella</taxon>
    </lineage>
</organism>
<sequence length="361" mass="40763">MKPSLIEKLKTLTYRYSEIGGLLSDSTVINDQDRYRELGKEYAQLEPIVKCFQQFQQNEKAIESAEEMQQEKDPELRKLAEEELEQLTLKKEELEDQLKLLLVPKDPNDERNVFLEIRAGTGGNEAAIFAGDLFRMYARYAETKGWRVNIVSAHEGEHGGFKEVIARVIGEGVYSQLKFESGAHRVQRVPVTESQGRIHTSACTVAIMPEVDEIDQIKINPAELRIDTFRASGAGGQHVNRTDSAIRITHLPTGVVVECQDERSQHKNKARAMSLLQSKLLAAERAKQDQEQAAKRKSLVGSGDRSERIRTYNFPQGRVTDHRINLTLYQLDEVIEGDLDPVIGPLIRELQAEQLAELSGE</sequence>